<evidence type="ECO:0000255" key="1">
    <source>
        <dbReference type="HAMAP-Rule" id="MF_01824"/>
    </source>
</evidence>
<organism>
    <name type="scientific">Saccharolobus islandicus (strain Y.N.15.51 / Yellowstone #2)</name>
    <name type="common">Sulfolobus islandicus</name>
    <dbReference type="NCBI Taxonomy" id="419942"/>
    <lineage>
        <taxon>Archaea</taxon>
        <taxon>Thermoproteota</taxon>
        <taxon>Thermoprotei</taxon>
        <taxon>Sulfolobales</taxon>
        <taxon>Sulfolobaceae</taxon>
        <taxon>Saccharolobus</taxon>
    </lineage>
</organism>
<reference key="1">
    <citation type="journal article" date="2009" name="Proc. Natl. Acad. Sci. U.S.A.">
        <title>Biogeography of the Sulfolobus islandicus pan-genome.</title>
        <authorList>
            <person name="Reno M.L."/>
            <person name="Held N.L."/>
            <person name="Fields C.J."/>
            <person name="Burke P.V."/>
            <person name="Whitaker R.J."/>
        </authorList>
    </citation>
    <scope>NUCLEOTIDE SEQUENCE [LARGE SCALE GENOMIC DNA]</scope>
    <source>
        <strain>Y.N.15.51 / Yellowstone #2</strain>
    </source>
</reference>
<comment type="function">
    <text evidence="1">Catalyzes the formation of pyridoxal 5'-phosphate from ribose 5-phosphate (RBP), glyceraldehyde 3-phosphate (G3P) and ammonia. The ammonia is provided by the PdxT subunit. Can also use ribulose 5-phosphate and dihydroxyacetone phosphate as substrates, resulting from enzyme-catalyzed isomerization of RBP and G3P, respectively.</text>
</comment>
<comment type="catalytic activity">
    <reaction evidence="1">
        <text>aldehydo-D-ribose 5-phosphate + D-glyceraldehyde 3-phosphate + L-glutamine = pyridoxal 5'-phosphate + L-glutamate + phosphate + 3 H2O + H(+)</text>
        <dbReference type="Rhea" id="RHEA:31507"/>
        <dbReference type="ChEBI" id="CHEBI:15377"/>
        <dbReference type="ChEBI" id="CHEBI:15378"/>
        <dbReference type="ChEBI" id="CHEBI:29985"/>
        <dbReference type="ChEBI" id="CHEBI:43474"/>
        <dbReference type="ChEBI" id="CHEBI:58273"/>
        <dbReference type="ChEBI" id="CHEBI:58359"/>
        <dbReference type="ChEBI" id="CHEBI:59776"/>
        <dbReference type="ChEBI" id="CHEBI:597326"/>
        <dbReference type="EC" id="4.3.3.6"/>
    </reaction>
</comment>
<comment type="pathway">
    <text evidence="1">Cofactor biosynthesis; pyridoxal 5'-phosphate biosynthesis.</text>
</comment>
<comment type="subunit">
    <text evidence="1">In the presence of PdxT, forms a dodecamer of heterodimers.</text>
</comment>
<comment type="similarity">
    <text evidence="1">Belongs to the PdxS/SNZ family.</text>
</comment>
<sequence length="338" mass="37401">MRLYELSFAQIEDFFYKLAEVKDIIKDSGLMEFLPELKKLDSTIQTGTTRVKHAFPIFQKGGVVMDITNVQQAQIAEEAGAVAVMVLDKLPYDVRKSGGVARMADPKIIGEVMNSITIPVMAKVRIGHYYEAKLLEALGVDMIDESEVLTPADEEHHINKWEFSVPFVNGARNLGEALRRTVEGASMIRTKGEAGTGNVSEAVKHMKIINSEIRSLISMSEEDRVKKAREYQVPYQLVELTAKIKRLPIVNFAAGGIATPADAALMMWLGADGLFVGSGIFKSQDPDERAKAVVLAAACWEYPEIVLEAQKMISEQKSMMGIDIKSLKPEELLQVRGL</sequence>
<accession>C3NGV8</accession>
<feature type="chain" id="PRO_1000216065" description="Pyridoxal 5'-phosphate synthase subunit PdxS">
    <location>
        <begin position="1"/>
        <end position="338"/>
    </location>
</feature>
<feature type="active site" description="Schiff-base intermediate with D-ribose 5-phosphate" evidence="1">
    <location>
        <position position="123"/>
    </location>
</feature>
<feature type="binding site" evidence="1">
    <location>
        <position position="66"/>
    </location>
    <ligand>
        <name>D-ribose 5-phosphate</name>
        <dbReference type="ChEBI" id="CHEBI:78346"/>
    </ligand>
</feature>
<feature type="binding site" evidence="1">
    <location>
        <position position="195"/>
    </location>
    <ligand>
        <name>D-ribose 5-phosphate</name>
        <dbReference type="ChEBI" id="CHEBI:78346"/>
    </ligand>
</feature>
<feature type="binding site" evidence="1">
    <location>
        <position position="207"/>
    </location>
    <ligand>
        <name>D-glyceraldehyde 3-phosphate</name>
        <dbReference type="ChEBI" id="CHEBI:59776"/>
    </ligand>
</feature>
<feature type="binding site" evidence="1">
    <location>
        <position position="256"/>
    </location>
    <ligand>
        <name>D-ribose 5-phosphate</name>
        <dbReference type="ChEBI" id="CHEBI:78346"/>
    </ligand>
</feature>
<feature type="binding site" evidence="1">
    <location>
        <begin position="277"/>
        <end position="278"/>
    </location>
    <ligand>
        <name>D-ribose 5-phosphate</name>
        <dbReference type="ChEBI" id="CHEBI:78346"/>
    </ligand>
</feature>
<proteinExistence type="inferred from homology"/>
<protein>
    <recommendedName>
        <fullName evidence="1">Pyridoxal 5'-phosphate synthase subunit PdxS</fullName>
        <shortName evidence="1">PLP synthase subunit PdxS</shortName>
        <ecNumber evidence="1">4.3.3.6</ecNumber>
    </recommendedName>
    <alternativeName>
        <fullName evidence="1">Pdx1</fullName>
    </alternativeName>
</protein>
<gene>
    <name evidence="1" type="primary">pdxS</name>
    <name type="ordered locus">YN1551_1273</name>
</gene>
<keyword id="KW-0456">Lyase</keyword>
<keyword id="KW-0663">Pyridoxal phosphate</keyword>
<keyword id="KW-0704">Schiff base</keyword>
<name>PDXS_SACI1</name>
<dbReference type="EC" id="4.3.3.6" evidence="1"/>
<dbReference type="EMBL" id="CP001404">
    <property type="protein sequence ID" value="ACP48368.1"/>
    <property type="molecule type" value="Genomic_DNA"/>
</dbReference>
<dbReference type="RefSeq" id="WP_012717394.1">
    <property type="nucleotide sequence ID" value="NC_012623.1"/>
</dbReference>
<dbReference type="SMR" id="C3NGV8"/>
<dbReference type="GeneID" id="7810932"/>
<dbReference type="KEGG" id="sin:YN1551_1273"/>
<dbReference type="HOGENOM" id="CLU_055352_1_0_2"/>
<dbReference type="UniPathway" id="UPA00245"/>
<dbReference type="Proteomes" id="UP000006818">
    <property type="component" value="Chromosome"/>
</dbReference>
<dbReference type="GO" id="GO:0036381">
    <property type="term" value="F:pyridoxal 5'-phosphate synthase (glutamine hydrolysing) activity"/>
    <property type="evidence" value="ECO:0007669"/>
    <property type="project" value="UniProtKB-UniRule"/>
</dbReference>
<dbReference type="GO" id="GO:0006520">
    <property type="term" value="P:amino acid metabolic process"/>
    <property type="evidence" value="ECO:0007669"/>
    <property type="project" value="TreeGrafter"/>
</dbReference>
<dbReference type="GO" id="GO:0042823">
    <property type="term" value="P:pyridoxal phosphate biosynthetic process"/>
    <property type="evidence" value="ECO:0007669"/>
    <property type="project" value="UniProtKB-UniRule"/>
</dbReference>
<dbReference type="GO" id="GO:0008615">
    <property type="term" value="P:pyridoxine biosynthetic process"/>
    <property type="evidence" value="ECO:0007669"/>
    <property type="project" value="TreeGrafter"/>
</dbReference>
<dbReference type="CDD" id="cd04727">
    <property type="entry name" value="pdxS"/>
    <property type="match status" value="1"/>
</dbReference>
<dbReference type="FunFam" id="3.20.20.70:FF:000001">
    <property type="entry name" value="Pyridoxine biosynthesis protein PDX1"/>
    <property type="match status" value="1"/>
</dbReference>
<dbReference type="Gene3D" id="3.20.20.70">
    <property type="entry name" value="Aldolase class I"/>
    <property type="match status" value="1"/>
</dbReference>
<dbReference type="HAMAP" id="MF_01824">
    <property type="entry name" value="PdxS"/>
    <property type="match status" value="1"/>
</dbReference>
<dbReference type="InterPro" id="IPR013785">
    <property type="entry name" value="Aldolase_TIM"/>
</dbReference>
<dbReference type="InterPro" id="IPR001852">
    <property type="entry name" value="PdxS/SNZ"/>
</dbReference>
<dbReference type="InterPro" id="IPR033755">
    <property type="entry name" value="PdxS/SNZ_N"/>
</dbReference>
<dbReference type="InterPro" id="IPR011060">
    <property type="entry name" value="RibuloseP-bd_barrel"/>
</dbReference>
<dbReference type="NCBIfam" id="NF003215">
    <property type="entry name" value="PRK04180.1"/>
    <property type="match status" value="1"/>
</dbReference>
<dbReference type="PANTHER" id="PTHR31829">
    <property type="entry name" value="PYRIDOXAL 5'-PHOSPHATE SYNTHASE SUBUNIT SNZ1-RELATED"/>
    <property type="match status" value="1"/>
</dbReference>
<dbReference type="PANTHER" id="PTHR31829:SF0">
    <property type="entry name" value="PYRIDOXAL 5'-PHOSPHATE SYNTHASE SUBUNIT SNZ1-RELATED"/>
    <property type="match status" value="1"/>
</dbReference>
<dbReference type="Pfam" id="PF01680">
    <property type="entry name" value="SOR_SNZ"/>
    <property type="match status" value="1"/>
</dbReference>
<dbReference type="PIRSF" id="PIRSF029271">
    <property type="entry name" value="Pdx1"/>
    <property type="match status" value="1"/>
</dbReference>
<dbReference type="SUPFAM" id="SSF51366">
    <property type="entry name" value="Ribulose-phoshate binding barrel"/>
    <property type="match status" value="1"/>
</dbReference>
<dbReference type="PROSITE" id="PS01235">
    <property type="entry name" value="PDXS_SNZ_1"/>
    <property type="match status" value="1"/>
</dbReference>
<dbReference type="PROSITE" id="PS51129">
    <property type="entry name" value="PDXS_SNZ_2"/>
    <property type="match status" value="1"/>
</dbReference>